<accession>Q5HEI1</accession>
<comment type="function">
    <text evidence="1">Bacterial hemolysins are exotoxins that attack blood cell membranes and cause cell rupture. Beta-hemolysin is a phospholipase C with specific activity toward sphingomyelins. Has a high specificity for sphingomyelin, hydrolyzes lysophosphatidylcholine at a much lower rate, but has no activity towards phosphatidylcholine, phosphatidylethanolamine, or phosphatidylserine (By similarity).</text>
</comment>
<comment type="catalytic activity">
    <reaction>
        <text>a 1,2-diacyl-sn-glycero-3-phosphocholine + H2O = phosphocholine + a 1,2-diacyl-sn-glycerol + H(+)</text>
        <dbReference type="Rhea" id="RHEA:10604"/>
        <dbReference type="ChEBI" id="CHEBI:15377"/>
        <dbReference type="ChEBI" id="CHEBI:15378"/>
        <dbReference type="ChEBI" id="CHEBI:17815"/>
        <dbReference type="ChEBI" id="CHEBI:57643"/>
        <dbReference type="ChEBI" id="CHEBI:295975"/>
        <dbReference type="EC" id="3.1.4.3"/>
    </reaction>
</comment>
<comment type="subunit">
    <text evidence="1">Monomer.</text>
</comment>
<comment type="similarity">
    <text evidence="3">Belongs to the neutral sphingomyelinase family.</text>
</comment>
<gene>
    <name type="primary">hlb</name>
    <name type="ordered locus">SACOL2003</name>
</gene>
<name>PHLC_STAAC</name>
<dbReference type="EC" id="3.1.4.3"/>
<dbReference type="EMBL" id="X13404">
    <property type="protein sequence ID" value="CAA31769.1"/>
    <property type="molecule type" value="Genomic_DNA"/>
</dbReference>
<dbReference type="EMBL" id="CP000046">
    <property type="protein sequence ID" value="AAW36972.1"/>
    <property type="molecule type" value="Genomic_DNA"/>
</dbReference>
<dbReference type="PIR" id="S15324">
    <property type="entry name" value="S15324"/>
</dbReference>
<dbReference type="SMR" id="Q5HEI1"/>
<dbReference type="KEGG" id="sac:SACOL2003"/>
<dbReference type="HOGENOM" id="CLU_033415_0_0_9"/>
<dbReference type="PRO" id="PR:Q5HEI1"/>
<dbReference type="Proteomes" id="UP000000530">
    <property type="component" value="Chromosome"/>
</dbReference>
<dbReference type="GO" id="GO:0005576">
    <property type="term" value="C:extracellular region"/>
    <property type="evidence" value="ECO:0007669"/>
    <property type="project" value="InterPro"/>
</dbReference>
<dbReference type="GO" id="GO:0034480">
    <property type="term" value="F:phosphatidylcholine phospholipase C activity"/>
    <property type="evidence" value="ECO:0007669"/>
    <property type="project" value="UniProtKB-EC"/>
</dbReference>
<dbReference type="GO" id="GO:0004767">
    <property type="term" value="F:sphingomyelin phosphodiesterase activity"/>
    <property type="evidence" value="ECO:0007669"/>
    <property type="project" value="InterPro"/>
</dbReference>
<dbReference type="GO" id="GO:0090729">
    <property type="term" value="F:toxin activity"/>
    <property type="evidence" value="ECO:0007669"/>
    <property type="project" value="UniProtKB-KW"/>
</dbReference>
<dbReference type="GO" id="GO:0031640">
    <property type="term" value="P:killing of cells of another organism"/>
    <property type="evidence" value="ECO:0007669"/>
    <property type="project" value="UniProtKB-KW"/>
</dbReference>
<dbReference type="CDD" id="cd09078">
    <property type="entry name" value="nSMase"/>
    <property type="match status" value="1"/>
</dbReference>
<dbReference type="Gene3D" id="3.60.10.10">
    <property type="entry name" value="Endonuclease/exonuclease/phosphatase"/>
    <property type="match status" value="1"/>
</dbReference>
<dbReference type="InterPro" id="IPR036691">
    <property type="entry name" value="Endo/exonu/phosph_ase_sf"/>
</dbReference>
<dbReference type="InterPro" id="IPR005135">
    <property type="entry name" value="Endo/exonuclease/phosphatase"/>
</dbReference>
<dbReference type="InterPro" id="IPR038772">
    <property type="entry name" value="Sph/SMPD2-like"/>
</dbReference>
<dbReference type="InterPro" id="IPR017766">
    <property type="entry name" value="Sphingomyelinase/PLipase_C"/>
</dbReference>
<dbReference type="NCBIfam" id="TIGR03395">
    <property type="entry name" value="sphingomy"/>
    <property type="match status" value="1"/>
</dbReference>
<dbReference type="PANTHER" id="PTHR16320:SF23">
    <property type="entry name" value="SPHINGOMYELINASE C 1"/>
    <property type="match status" value="1"/>
</dbReference>
<dbReference type="PANTHER" id="PTHR16320">
    <property type="entry name" value="SPHINGOMYELINASE FAMILY MEMBER"/>
    <property type="match status" value="1"/>
</dbReference>
<dbReference type="Pfam" id="PF03372">
    <property type="entry name" value="Exo_endo_phos"/>
    <property type="match status" value="1"/>
</dbReference>
<dbReference type="SUPFAM" id="SSF56219">
    <property type="entry name" value="DNase I-like"/>
    <property type="match status" value="1"/>
</dbReference>
<reference key="1">
    <citation type="journal article" date="1989" name="Nucleic Acids Res.">
        <title>Nucleotide sequence: the beta-hemolysin gene of Staphylococcus aureus.</title>
        <authorList>
            <person name="Projan S.J."/>
            <person name="Kornblum J."/>
            <person name="Kreiswirth B."/>
            <person name="Moghazeh S.L."/>
            <person name="Eisner W."/>
            <person name="Novick R.P."/>
        </authorList>
    </citation>
    <scope>NUCLEOTIDE SEQUENCE [GENOMIC DNA]</scope>
</reference>
<reference key="2">
    <citation type="journal article" date="2005" name="J. Bacteriol.">
        <title>Insights on evolution of virulence and resistance from the complete genome analysis of an early methicillin-resistant Staphylococcus aureus strain and a biofilm-producing methicillin-resistant Staphylococcus epidermidis strain.</title>
        <authorList>
            <person name="Gill S.R."/>
            <person name="Fouts D.E."/>
            <person name="Archer G.L."/>
            <person name="Mongodin E.F."/>
            <person name="DeBoy R.T."/>
            <person name="Ravel J."/>
            <person name="Paulsen I.T."/>
            <person name="Kolonay J.F."/>
            <person name="Brinkac L.M."/>
            <person name="Beanan M.J."/>
            <person name="Dodson R.J."/>
            <person name="Daugherty S.C."/>
            <person name="Madupu R."/>
            <person name="Angiuoli S.V."/>
            <person name="Durkin A.S."/>
            <person name="Haft D.H."/>
            <person name="Vamathevan J.J."/>
            <person name="Khouri H."/>
            <person name="Utterback T.R."/>
            <person name="Lee C."/>
            <person name="Dimitrov G."/>
            <person name="Jiang L."/>
            <person name="Qin H."/>
            <person name="Weidman J."/>
            <person name="Tran K."/>
            <person name="Kang K.H."/>
            <person name="Hance I.R."/>
            <person name="Nelson K.E."/>
            <person name="Fraser C.M."/>
        </authorList>
    </citation>
    <scope>NUCLEOTIDE SEQUENCE [LARGE SCALE GENOMIC DNA]</scope>
    <source>
        <strain>COL</strain>
    </source>
</reference>
<protein>
    <recommendedName>
        <fullName>Phospholipase C</fullName>
        <ecNumber>3.1.4.3</ecNumber>
    </recommendedName>
    <alternativeName>
        <fullName>Beta-hemolysin</fullName>
    </alternativeName>
    <alternativeName>
        <fullName>Beta-toxin</fullName>
    </alternativeName>
    <alternativeName>
        <fullName>Sphingomyelinase</fullName>
        <shortName>SMase</shortName>
    </alternativeName>
</protein>
<evidence type="ECO:0000250" key="1"/>
<evidence type="ECO:0000255" key="2"/>
<evidence type="ECO:0000305" key="3"/>
<sequence>MVKKTKSNSLKKVATLALANLLLVGALTDNSAKAESKKDDTDLKLVSHNVYMLSTVLYPNWGQYKRADLIGQSSYIKNNDVVIFNEAFDNGASDKLLSNVKKEYPYQTPVLGRSQSGWDKTEGSYSSTVAEDGGVAIVSKYPIKEKIQHVFKSGCGFDNDSNKGFVYTKIEKNGKNVHVIGTHTQSEDSRCGAGHDRKIRAEQMKEISDFVKKKNIPKDETVYIGGDLNVNKGTPEFKDMLKNLNVNDVLYAGHNSTWDPQSNSIAKYNYPNGKPEHLDYIFTDKDHKQPKQLVNEVVTEKPKPWDVYAFPYYYVYNDFSDHYPIKAYSK</sequence>
<proteinExistence type="inferred from homology"/>
<keyword id="KW-0204">Cytolysis</keyword>
<keyword id="KW-1015">Disulfide bond</keyword>
<keyword id="KW-0354">Hemolysis</keyword>
<keyword id="KW-0378">Hydrolase</keyword>
<keyword id="KW-0732">Signal</keyword>
<keyword id="KW-0800">Toxin</keyword>
<keyword id="KW-0843">Virulence</keyword>
<organism>
    <name type="scientific">Staphylococcus aureus (strain COL)</name>
    <dbReference type="NCBI Taxonomy" id="93062"/>
    <lineage>
        <taxon>Bacteria</taxon>
        <taxon>Bacillati</taxon>
        <taxon>Bacillota</taxon>
        <taxon>Bacilli</taxon>
        <taxon>Bacillales</taxon>
        <taxon>Staphylococcaceae</taxon>
        <taxon>Staphylococcus</taxon>
    </lineage>
</organism>
<feature type="signal peptide" evidence="1">
    <location>
        <begin position="1"/>
        <end position="34"/>
    </location>
</feature>
<feature type="chain" id="PRO_0000019902" description="Phospholipase C">
    <location>
        <begin position="35"/>
        <end position="330"/>
    </location>
</feature>
<feature type="disulfide bond" evidence="2">
    <location>
        <begin position="155"/>
        <end position="191"/>
    </location>
</feature>